<evidence type="ECO:0000255" key="1">
    <source>
        <dbReference type="HAMAP-Rule" id="MF_01522"/>
    </source>
</evidence>
<evidence type="ECO:0000305" key="2"/>
<comment type="function">
    <text evidence="1">Transport of potassium into the cell. Likely operates as a K(+):H(+) symporter.</text>
</comment>
<comment type="catalytic activity">
    <reaction evidence="1">
        <text>K(+)(in) + H(+)(in) = K(+)(out) + H(+)(out)</text>
        <dbReference type="Rhea" id="RHEA:28490"/>
        <dbReference type="ChEBI" id="CHEBI:15378"/>
        <dbReference type="ChEBI" id="CHEBI:29103"/>
    </reaction>
    <physiologicalReaction direction="right-to-left" evidence="1">
        <dbReference type="Rhea" id="RHEA:28492"/>
    </physiologicalReaction>
</comment>
<comment type="subcellular location">
    <subcellularLocation>
        <location evidence="1">Cell membrane</location>
        <topology evidence="1">Multi-pass membrane protein</topology>
    </subcellularLocation>
</comment>
<comment type="similarity">
    <text evidence="1">Belongs to the HAK/KUP transporter (TC 2.A.72) family.</text>
</comment>
<comment type="sequence caution" evidence="2">
    <conflict type="frameshift">
        <sequence resource="EMBL-CDS" id="ABF38209"/>
    </conflict>
</comment>
<gene>
    <name evidence="1" type="primary">kup</name>
    <name type="ordered locus">MGAS10750_Spy1259</name>
</gene>
<name>KUP_STRPF</name>
<organism>
    <name type="scientific">Streptococcus pyogenes serotype M4 (strain MGAS10750)</name>
    <dbReference type="NCBI Taxonomy" id="370554"/>
    <lineage>
        <taxon>Bacteria</taxon>
        <taxon>Bacillati</taxon>
        <taxon>Bacillota</taxon>
        <taxon>Bacilli</taxon>
        <taxon>Lactobacillales</taxon>
        <taxon>Streptococcaceae</taxon>
        <taxon>Streptococcus</taxon>
    </lineage>
</organism>
<protein>
    <recommendedName>
        <fullName evidence="1">Probable potassium transport system protein Kup</fullName>
    </recommendedName>
</protein>
<reference key="1">
    <citation type="journal article" date="2006" name="Proc. Natl. Acad. Sci. U.S.A.">
        <title>Molecular genetic anatomy of inter- and intraserotype variation in the human bacterial pathogen group A Streptococcus.</title>
        <authorList>
            <person name="Beres S.B."/>
            <person name="Richter E.W."/>
            <person name="Nagiec M.J."/>
            <person name="Sumby P."/>
            <person name="Porcella S.F."/>
            <person name="DeLeo F.R."/>
            <person name="Musser J.M."/>
        </authorList>
    </citation>
    <scope>NUCLEOTIDE SEQUENCE [LARGE SCALE GENOMIC DNA]</scope>
    <source>
        <strain>MGAS10750</strain>
    </source>
</reference>
<dbReference type="EMBL" id="CP000262">
    <property type="protein sequence ID" value="ABF38209.1"/>
    <property type="status" value="ALT_FRAME"/>
    <property type="molecule type" value="Genomic_DNA"/>
</dbReference>
<dbReference type="KEGG" id="spi:MGAS10750_Spy1259"/>
<dbReference type="HOGENOM" id="CLU_008142_4_1_9"/>
<dbReference type="Proteomes" id="UP000002434">
    <property type="component" value="Chromosome"/>
</dbReference>
<dbReference type="GO" id="GO:0005886">
    <property type="term" value="C:plasma membrane"/>
    <property type="evidence" value="ECO:0007669"/>
    <property type="project" value="UniProtKB-SubCell"/>
</dbReference>
<dbReference type="GO" id="GO:0015079">
    <property type="term" value="F:potassium ion transmembrane transporter activity"/>
    <property type="evidence" value="ECO:0007669"/>
    <property type="project" value="UniProtKB-UniRule"/>
</dbReference>
<dbReference type="GO" id="GO:0015293">
    <property type="term" value="F:symporter activity"/>
    <property type="evidence" value="ECO:0007669"/>
    <property type="project" value="UniProtKB-UniRule"/>
</dbReference>
<dbReference type="HAMAP" id="MF_01522">
    <property type="entry name" value="Kup"/>
    <property type="match status" value="1"/>
</dbReference>
<dbReference type="InterPro" id="IPR003855">
    <property type="entry name" value="K+_transporter"/>
</dbReference>
<dbReference type="InterPro" id="IPR053952">
    <property type="entry name" value="K_trans_C"/>
</dbReference>
<dbReference type="InterPro" id="IPR053951">
    <property type="entry name" value="K_trans_N"/>
</dbReference>
<dbReference type="InterPro" id="IPR023051">
    <property type="entry name" value="Kup"/>
</dbReference>
<dbReference type="PANTHER" id="PTHR30540:SF83">
    <property type="entry name" value="K+ POTASSIUM TRANSPORTER"/>
    <property type="match status" value="1"/>
</dbReference>
<dbReference type="PANTHER" id="PTHR30540">
    <property type="entry name" value="OSMOTIC STRESS POTASSIUM TRANSPORTER"/>
    <property type="match status" value="1"/>
</dbReference>
<dbReference type="Pfam" id="PF02705">
    <property type="entry name" value="K_trans"/>
    <property type="match status" value="1"/>
</dbReference>
<dbReference type="Pfam" id="PF22776">
    <property type="entry name" value="K_trans_C"/>
    <property type="match status" value="1"/>
</dbReference>
<keyword id="KW-1003">Cell membrane</keyword>
<keyword id="KW-0406">Ion transport</keyword>
<keyword id="KW-0472">Membrane</keyword>
<keyword id="KW-0630">Potassium</keyword>
<keyword id="KW-0633">Potassium transport</keyword>
<keyword id="KW-0769">Symport</keyword>
<keyword id="KW-0812">Transmembrane</keyword>
<keyword id="KW-1133">Transmembrane helix</keyword>
<keyword id="KW-0813">Transport</keyword>
<sequence>MSDSHLTAFDKASKAGFIIALGIVYGDIGTSPLYTMQSLVENQGGVNQVSESFILGSISLIIWTLTLITTIKYVLIALKADNHHEGGIFSLFTLVRKMSPWLIIPAMIGGATLLSDGALTPAVTVTSAIEGLKAVPGLSHIYQNQTNIIITTLVILIVLFGIQRFGTGFIGKIFGPVMFIWFSFLGVSGFFNTLGHLEIFKAINPYYALHLLFSPENHRGIFILGSIFLATTGAEALYSDLGHVGRGNIYVSWPFVKMCIVWSYCGQAAWILANKHSGIELNPFFASVPSQLRVYLVSLATLAAIIASQALISGSFTLVSEAMRLKIFPLFRVTYPGANLGQLYIPVINWILFAVTSCTVLAFRTSAHMEAAYGLAITITMLMTTILLKYYLIKKGTRPILAHLAMAFFALVEFIFFLASAIKFMHGGYAVVILALAIVFVMFIWHAGTRIVFKYVKSLNLNDYKEQIKQLRDDVCFDLYQTNVVYLSNRMQDHMIDRSILYSILDKRPKRAQVYWFVNVQVTDEPYTAKYKVDMMGTDYMVRVNLYLGFRMPQTVPRYLRTIVQDLMESGRLPKQEQEYTITPGRDVGDFRFVLIEERVSNARQLSNFERFIMQTKASIKHVTASPMRWFGLQYSEVTLEVVPLILSDVLKLPIKELVPVEDSEA</sequence>
<proteinExistence type="inferred from homology"/>
<accession>Q1J5X4</accession>
<feature type="chain" id="PRO_0000279838" description="Probable potassium transport system protein Kup">
    <location>
        <begin position="1"/>
        <end position="666"/>
    </location>
</feature>
<feature type="transmembrane region" description="Helical" evidence="1">
    <location>
        <begin position="16"/>
        <end position="36"/>
    </location>
</feature>
<feature type="transmembrane region" description="Helical" evidence="1">
    <location>
        <begin position="58"/>
        <end position="78"/>
    </location>
</feature>
<feature type="transmembrane region" description="Helical" evidence="1">
    <location>
        <begin position="100"/>
        <end position="120"/>
    </location>
</feature>
<feature type="transmembrane region" description="Helical" evidence="1">
    <location>
        <begin position="141"/>
        <end position="161"/>
    </location>
</feature>
<feature type="transmembrane region" description="Helical" evidence="1">
    <location>
        <begin position="165"/>
        <end position="185"/>
    </location>
</feature>
<feature type="transmembrane region" description="Helical" evidence="1">
    <location>
        <begin position="221"/>
        <end position="241"/>
    </location>
</feature>
<feature type="transmembrane region" description="Helical" evidence="1">
    <location>
        <begin position="253"/>
        <end position="273"/>
    </location>
</feature>
<feature type="transmembrane region" description="Helical" evidence="1">
    <location>
        <begin position="294"/>
        <end position="314"/>
    </location>
</feature>
<feature type="transmembrane region" description="Helical" evidence="1">
    <location>
        <begin position="343"/>
        <end position="363"/>
    </location>
</feature>
<feature type="transmembrane region" description="Helical" evidence="1">
    <location>
        <begin position="373"/>
        <end position="393"/>
    </location>
</feature>
<feature type="transmembrane region" description="Helical" evidence="1">
    <location>
        <begin position="399"/>
        <end position="419"/>
    </location>
</feature>
<feature type="transmembrane region" description="Helical" evidence="1">
    <location>
        <begin position="424"/>
        <end position="444"/>
    </location>
</feature>